<dbReference type="EC" id="6.1.1.20" evidence="1"/>
<dbReference type="EMBL" id="CP000013">
    <property type="protein sequence ID" value="AAU07364.1"/>
    <property type="molecule type" value="Genomic_DNA"/>
</dbReference>
<dbReference type="RefSeq" id="WP_011193826.1">
    <property type="nucleotide sequence ID" value="NC_006156.1"/>
</dbReference>
<dbReference type="SMR" id="Q661A7"/>
<dbReference type="GeneID" id="45161307"/>
<dbReference type="KEGG" id="bga:BG0525"/>
<dbReference type="eggNOG" id="COG0072">
    <property type="taxonomic scope" value="Bacteria"/>
</dbReference>
<dbReference type="HOGENOM" id="CLU_020279_3_0_12"/>
<dbReference type="OrthoDB" id="9805455at2"/>
<dbReference type="Proteomes" id="UP000002276">
    <property type="component" value="Chromosome"/>
</dbReference>
<dbReference type="GO" id="GO:0009328">
    <property type="term" value="C:phenylalanine-tRNA ligase complex"/>
    <property type="evidence" value="ECO:0007669"/>
    <property type="project" value="TreeGrafter"/>
</dbReference>
<dbReference type="GO" id="GO:0005524">
    <property type="term" value="F:ATP binding"/>
    <property type="evidence" value="ECO:0007669"/>
    <property type="project" value="UniProtKB-UniRule"/>
</dbReference>
<dbReference type="GO" id="GO:0000287">
    <property type="term" value="F:magnesium ion binding"/>
    <property type="evidence" value="ECO:0007669"/>
    <property type="project" value="InterPro"/>
</dbReference>
<dbReference type="GO" id="GO:0004826">
    <property type="term" value="F:phenylalanine-tRNA ligase activity"/>
    <property type="evidence" value="ECO:0007669"/>
    <property type="project" value="UniProtKB-UniRule"/>
</dbReference>
<dbReference type="GO" id="GO:0003723">
    <property type="term" value="F:RNA binding"/>
    <property type="evidence" value="ECO:0007669"/>
    <property type="project" value="InterPro"/>
</dbReference>
<dbReference type="GO" id="GO:0006432">
    <property type="term" value="P:phenylalanyl-tRNA aminoacylation"/>
    <property type="evidence" value="ECO:0007669"/>
    <property type="project" value="UniProtKB-UniRule"/>
</dbReference>
<dbReference type="CDD" id="cd00769">
    <property type="entry name" value="PheRS_beta_core"/>
    <property type="match status" value="1"/>
</dbReference>
<dbReference type="Gene3D" id="3.30.56.10">
    <property type="match status" value="2"/>
</dbReference>
<dbReference type="Gene3D" id="3.30.930.10">
    <property type="entry name" value="Bira Bifunctional Protein, Domain 2"/>
    <property type="match status" value="1"/>
</dbReference>
<dbReference type="Gene3D" id="3.50.40.10">
    <property type="entry name" value="Phenylalanyl-trna Synthetase, Chain B, domain 3"/>
    <property type="match status" value="1"/>
</dbReference>
<dbReference type="HAMAP" id="MF_00284">
    <property type="entry name" value="Phe_tRNA_synth_beta2"/>
    <property type="match status" value="1"/>
</dbReference>
<dbReference type="InterPro" id="IPR045864">
    <property type="entry name" value="aa-tRNA-synth_II/BPL/LPL"/>
</dbReference>
<dbReference type="InterPro" id="IPR005146">
    <property type="entry name" value="B3/B4_tRNA-bd"/>
</dbReference>
<dbReference type="InterPro" id="IPR009061">
    <property type="entry name" value="DNA-bd_dom_put_sf"/>
</dbReference>
<dbReference type="InterPro" id="IPR045060">
    <property type="entry name" value="Phe-tRNA-ligase_IIc_bsu"/>
</dbReference>
<dbReference type="InterPro" id="IPR004531">
    <property type="entry name" value="Phe-tRNA-synth_IIc_bsu_arc_euk"/>
</dbReference>
<dbReference type="InterPro" id="IPR020825">
    <property type="entry name" value="Phe-tRNA_synthase-like_B3/B4"/>
</dbReference>
<dbReference type="InterPro" id="IPR022918">
    <property type="entry name" value="Phe_tRNA_ligase_beta2_arc"/>
</dbReference>
<dbReference type="InterPro" id="IPR041616">
    <property type="entry name" value="PheRS_beta_core"/>
</dbReference>
<dbReference type="InterPro" id="IPR040659">
    <property type="entry name" value="PhetRS_B1"/>
</dbReference>
<dbReference type="InterPro" id="IPR005147">
    <property type="entry name" value="tRNA_synthase_B5-dom"/>
</dbReference>
<dbReference type="NCBIfam" id="TIGR00471">
    <property type="entry name" value="pheT_arch"/>
    <property type="match status" value="1"/>
</dbReference>
<dbReference type="PANTHER" id="PTHR10947:SF0">
    <property type="entry name" value="PHENYLALANINE--TRNA LIGASE BETA SUBUNIT"/>
    <property type="match status" value="1"/>
</dbReference>
<dbReference type="PANTHER" id="PTHR10947">
    <property type="entry name" value="PHENYLALANYL-TRNA SYNTHETASE BETA CHAIN AND LEUCINE-RICH REPEAT-CONTAINING PROTEIN 47"/>
    <property type="match status" value="1"/>
</dbReference>
<dbReference type="Pfam" id="PF03484">
    <property type="entry name" value="B5"/>
    <property type="match status" value="1"/>
</dbReference>
<dbReference type="Pfam" id="PF18262">
    <property type="entry name" value="PhetRS_B1"/>
    <property type="match status" value="1"/>
</dbReference>
<dbReference type="Pfam" id="PF17759">
    <property type="entry name" value="tRNA_synthFbeta"/>
    <property type="match status" value="1"/>
</dbReference>
<dbReference type="SMART" id="SM00873">
    <property type="entry name" value="B3_4"/>
    <property type="match status" value="1"/>
</dbReference>
<dbReference type="SMART" id="SM00874">
    <property type="entry name" value="B5"/>
    <property type="match status" value="1"/>
</dbReference>
<dbReference type="SUPFAM" id="SSF55681">
    <property type="entry name" value="Class II aaRS and biotin synthetases"/>
    <property type="match status" value="1"/>
</dbReference>
<dbReference type="SUPFAM" id="SSF46955">
    <property type="entry name" value="Putative DNA-binding domain"/>
    <property type="match status" value="1"/>
</dbReference>
<dbReference type="PROSITE" id="PS51483">
    <property type="entry name" value="B5"/>
    <property type="match status" value="1"/>
</dbReference>
<accession>Q661A7</accession>
<proteinExistence type="inferred from homology"/>
<evidence type="ECO:0000255" key="1">
    <source>
        <dbReference type="HAMAP-Rule" id="MF_00284"/>
    </source>
</evidence>
<feature type="chain" id="PRO_1000022415" description="Phenylalanine--tRNA ligase beta subunit">
    <location>
        <begin position="1"/>
        <end position="566"/>
    </location>
</feature>
<feature type="domain" description="B5" evidence="1">
    <location>
        <begin position="287"/>
        <end position="362"/>
    </location>
</feature>
<feature type="binding site" evidence="1">
    <location>
        <position position="340"/>
    </location>
    <ligand>
        <name>Mg(2+)</name>
        <dbReference type="ChEBI" id="CHEBI:18420"/>
        <note>shared with alpha subunit</note>
    </ligand>
</feature>
<feature type="binding site" evidence="1">
    <location>
        <position position="346"/>
    </location>
    <ligand>
        <name>Mg(2+)</name>
        <dbReference type="ChEBI" id="CHEBI:18420"/>
        <note>shared with alpha subunit</note>
    </ligand>
</feature>
<feature type="binding site" evidence="1">
    <location>
        <position position="349"/>
    </location>
    <ligand>
        <name>Mg(2+)</name>
        <dbReference type="ChEBI" id="CHEBI:18420"/>
        <note>shared with alpha subunit</note>
    </ligand>
</feature>
<feature type="binding site" evidence="1">
    <location>
        <position position="350"/>
    </location>
    <ligand>
        <name>Mg(2+)</name>
        <dbReference type="ChEBI" id="CHEBI:18420"/>
        <note>shared with alpha subunit</note>
    </ligand>
</feature>
<keyword id="KW-0030">Aminoacyl-tRNA synthetase</keyword>
<keyword id="KW-0067">ATP-binding</keyword>
<keyword id="KW-0963">Cytoplasm</keyword>
<keyword id="KW-0436">Ligase</keyword>
<keyword id="KW-0460">Magnesium</keyword>
<keyword id="KW-0479">Metal-binding</keyword>
<keyword id="KW-0547">Nucleotide-binding</keyword>
<keyword id="KW-0648">Protein biosynthesis</keyword>
<gene>
    <name evidence="1" type="primary">pheT</name>
    <name type="ordered locus">BG0525</name>
</gene>
<name>SYFB_BORGP</name>
<protein>
    <recommendedName>
        <fullName evidence="1">Phenylalanine--tRNA ligase beta subunit</fullName>
        <ecNumber evidence="1">6.1.1.20</ecNumber>
    </recommendedName>
    <alternativeName>
        <fullName evidence="1">Phenylalanyl-tRNA synthetase beta subunit</fullName>
        <shortName evidence="1">PheRS</shortName>
    </alternativeName>
</protein>
<sequence length="566" mass="65016">MPKVEIYKNLFLDKIGKNFTNLEISELLEPFKAEFDGFDENSGKIKIEFNDTNRPDLWSYTGLARQIKTYLFGEIPYYDFFSKKGDFKKCYGEILVDNKMSQIRPFIFGFLAKGLIINDRMLEALIQFQEKLCQSYGQKRRRVAMGMYNSNFIKFPISYVASSPNHKFVPLGMDCELSLLEINEKHPKGLEYSYIVKNFDKYPLLLDNNNNVVSYPPIINSNNIGSLKVGDTELFVEVTGIDFEATLLALSIVACDFYDMGFEILPVKTVFKDPFGLDFEELVCPYYFQEEVEFDVKNVNRLLGNNLTLERICLNLKKMGVSSYSRDFKNYIVPPFYRNDFLHEVDVIEDVMIGEGLASFYPELPKAFTIGRLSALEEFSRNVRNLMMGMGFQEMIYNYMGSRKDFIDRMNINDQNFLKVSNPMTENYEYIRASIIPNLLKSESVSSNFPYPHKIFEVGKVALKNLDAAEGTSTFTNLAFLMSGKEISFNEINSIVATLFYYLNIEIILRESKATFYINGRGADILIEGFNVGSFGEISPYVLNNFGIFIPCSVFEVNINKLVSQS</sequence>
<organism>
    <name type="scientific">Borrelia garinii subsp. bavariensis (strain ATCC BAA-2496 / DSM 23469 / PBi)</name>
    <name type="common">Borreliella bavariensis</name>
    <dbReference type="NCBI Taxonomy" id="290434"/>
    <lineage>
        <taxon>Bacteria</taxon>
        <taxon>Pseudomonadati</taxon>
        <taxon>Spirochaetota</taxon>
        <taxon>Spirochaetia</taxon>
        <taxon>Spirochaetales</taxon>
        <taxon>Borreliaceae</taxon>
        <taxon>Borreliella</taxon>
    </lineage>
</organism>
<reference key="1">
    <citation type="journal article" date="2004" name="Nucleic Acids Res.">
        <title>Comparative analysis of the Borrelia garinii genome.</title>
        <authorList>
            <person name="Gloeckner G."/>
            <person name="Lehmann R."/>
            <person name="Romualdi A."/>
            <person name="Pradella S."/>
            <person name="Schulte-Spechtel U."/>
            <person name="Schilhabel M."/>
            <person name="Wilske B."/>
            <person name="Suehnel J."/>
            <person name="Platzer M."/>
        </authorList>
    </citation>
    <scope>NUCLEOTIDE SEQUENCE [LARGE SCALE GENOMIC DNA]</scope>
    <source>
        <strain>ATCC BAA-2496 / DSM 23469 / PBi</strain>
    </source>
</reference>
<comment type="catalytic activity">
    <reaction evidence="1">
        <text>tRNA(Phe) + L-phenylalanine + ATP = L-phenylalanyl-tRNA(Phe) + AMP + diphosphate + H(+)</text>
        <dbReference type="Rhea" id="RHEA:19413"/>
        <dbReference type="Rhea" id="RHEA-COMP:9668"/>
        <dbReference type="Rhea" id="RHEA-COMP:9699"/>
        <dbReference type="ChEBI" id="CHEBI:15378"/>
        <dbReference type="ChEBI" id="CHEBI:30616"/>
        <dbReference type="ChEBI" id="CHEBI:33019"/>
        <dbReference type="ChEBI" id="CHEBI:58095"/>
        <dbReference type="ChEBI" id="CHEBI:78442"/>
        <dbReference type="ChEBI" id="CHEBI:78531"/>
        <dbReference type="ChEBI" id="CHEBI:456215"/>
        <dbReference type="EC" id="6.1.1.20"/>
    </reaction>
</comment>
<comment type="cofactor">
    <cofactor evidence="1">
        <name>Mg(2+)</name>
        <dbReference type="ChEBI" id="CHEBI:18420"/>
    </cofactor>
</comment>
<comment type="subunit">
    <text evidence="1">Tetramer of two alpha and two beta subunits.</text>
</comment>
<comment type="subcellular location">
    <subcellularLocation>
        <location evidence="1">Cytoplasm</location>
    </subcellularLocation>
</comment>
<comment type="similarity">
    <text evidence="1">Belongs to the phenylalanyl-tRNA synthetase beta subunit family. Type 2 subfamily.</text>
</comment>